<keyword id="KW-0963">Cytoplasm</keyword>
<keyword id="KW-0378">Hydrolase</keyword>
<keyword id="KW-0597">Phosphoprotein</keyword>
<keyword id="KW-0904">Protein phosphatase</keyword>
<keyword id="KW-1185">Reference proteome</keyword>
<name>PTP3_YEAST</name>
<dbReference type="EC" id="3.1.3.48"/>
<dbReference type="EMBL" id="AF006304">
    <property type="protein sequence ID" value="AAB70811.1"/>
    <property type="molecule type" value="Genomic_DNA"/>
</dbReference>
<dbReference type="EMBL" id="U18814">
    <property type="protein sequence ID" value="AAB64614.1"/>
    <property type="molecule type" value="Genomic_DNA"/>
</dbReference>
<dbReference type="EMBL" id="BK006939">
    <property type="protein sequence ID" value="DAA07735.2"/>
    <property type="molecule type" value="Genomic_DNA"/>
</dbReference>
<dbReference type="PIR" id="S50578">
    <property type="entry name" value="S50578"/>
</dbReference>
<dbReference type="RefSeq" id="NP_010998.2">
    <property type="nucleotide sequence ID" value="NM_001178966.2"/>
</dbReference>
<dbReference type="SMR" id="P40048"/>
<dbReference type="BioGRID" id="36819">
    <property type="interactions" value="120"/>
</dbReference>
<dbReference type="DIP" id="DIP-2370N"/>
<dbReference type="FunCoup" id="P40048">
    <property type="interactions" value="175"/>
</dbReference>
<dbReference type="IntAct" id="P40048">
    <property type="interactions" value="11"/>
</dbReference>
<dbReference type="MINT" id="P40048"/>
<dbReference type="STRING" id="4932.YER075C"/>
<dbReference type="GlyGen" id="P40048">
    <property type="glycosylation" value="1 site"/>
</dbReference>
<dbReference type="iPTMnet" id="P40048"/>
<dbReference type="PaxDb" id="4932-YER075C"/>
<dbReference type="PeptideAtlas" id="P40048"/>
<dbReference type="EnsemblFungi" id="YER075C_mRNA">
    <property type="protein sequence ID" value="YER075C"/>
    <property type="gene ID" value="YER075C"/>
</dbReference>
<dbReference type="GeneID" id="856807"/>
<dbReference type="KEGG" id="sce:YER075C"/>
<dbReference type="AGR" id="SGD:S000000877"/>
<dbReference type="SGD" id="S000000877">
    <property type="gene designation" value="PTP3"/>
</dbReference>
<dbReference type="VEuPathDB" id="FungiDB:YER075C"/>
<dbReference type="eggNOG" id="KOG0789">
    <property type="taxonomic scope" value="Eukaryota"/>
</dbReference>
<dbReference type="GeneTree" id="ENSGT00940000171635"/>
<dbReference type="HOGENOM" id="CLU_007989_1_0_1"/>
<dbReference type="InParanoid" id="P40048"/>
<dbReference type="OMA" id="KDWPDLG"/>
<dbReference type="OrthoDB" id="6058203at2759"/>
<dbReference type="BioCyc" id="YEAST:G3O-30246-MONOMER"/>
<dbReference type="Reactome" id="R-SCE-5675221">
    <property type="pathway name" value="Negative regulation of MAPK pathway"/>
</dbReference>
<dbReference type="Reactome" id="R-SCE-6798695">
    <property type="pathway name" value="Neutrophil degranulation"/>
</dbReference>
<dbReference type="BioGRID-ORCS" id="856807">
    <property type="hits" value="6 hits in 10 CRISPR screens"/>
</dbReference>
<dbReference type="PRO" id="PR:P40048"/>
<dbReference type="Proteomes" id="UP000002311">
    <property type="component" value="Chromosome V"/>
</dbReference>
<dbReference type="RNAct" id="P40048">
    <property type="molecule type" value="protein"/>
</dbReference>
<dbReference type="GO" id="GO:0005737">
    <property type="term" value="C:cytoplasm"/>
    <property type="evidence" value="ECO:0000314"/>
    <property type="project" value="SGD"/>
</dbReference>
<dbReference type="GO" id="GO:0005634">
    <property type="term" value="C:nucleus"/>
    <property type="evidence" value="ECO:0000314"/>
    <property type="project" value="SGD"/>
</dbReference>
<dbReference type="GO" id="GO:0140311">
    <property type="term" value="F:protein sequestering activity"/>
    <property type="evidence" value="ECO:0000315"/>
    <property type="project" value="SGD"/>
</dbReference>
<dbReference type="GO" id="GO:0004725">
    <property type="term" value="F:protein tyrosine phosphatase activity"/>
    <property type="evidence" value="ECO:0000314"/>
    <property type="project" value="SGD"/>
</dbReference>
<dbReference type="GO" id="GO:0071474">
    <property type="term" value="P:cellular hyperosmotic response"/>
    <property type="evidence" value="ECO:0000315"/>
    <property type="project" value="SGD"/>
</dbReference>
<dbReference type="GO" id="GO:0071852">
    <property type="term" value="P:fungal-type cell wall organization or biogenesis"/>
    <property type="evidence" value="ECO:0000316"/>
    <property type="project" value="SGD"/>
</dbReference>
<dbReference type="GO" id="GO:1903138">
    <property type="term" value="P:negative regulation of cell integrity MAPK cascade"/>
    <property type="evidence" value="ECO:0000314"/>
    <property type="project" value="SGD"/>
</dbReference>
<dbReference type="GO" id="GO:0071507">
    <property type="term" value="P:pheromone response MAPK cascade"/>
    <property type="evidence" value="ECO:0000315"/>
    <property type="project" value="SGD"/>
</dbReference>
<dbReference type="GO" id="GO:0043937">
    <property type="term" value="P:regulation of sporulation"/>
    <property type="evidence" value="ECO:0000316"/>
    <property type="project" value="SGD"/>
</dbReference>
<dbReference type="GO" id="GO:0007165">
    <property type="term" value="P:signal transduction"/>
    <property type="evidence" value="ECO:0000318"/>
    <property type="project" value="GO_Central"/>
</dbReference>
<dbReference type="CDD" id="cd01446">
    <property type="entry name" value="DSP_MapKP"/>
    <property type="match status" value="1"/>
</dbReference>
<dbReference type="CDD" id="cd18533">
    <property type="entry name" value="PTP_fungal"/>
    <property type="match status" value="1"/>
</dbReference>
<dbReference type="FunFam" id="3.40.250.10:FF:000095">
    <property type="entry name" value="Tyrosine phosphatase"/>
    <property type="match status" value="1"/>
</dbReference>
<dbReference type="Gene3D" id="3.90.190.10">
    <property type="entry name" value="Protein tyrosine phosphatase superfamily"/>
    <property type="match status" value="1"/>
</dbReference>
<dbReference type="Gene3D" id="3.40.250.10">
    <property type="entry name" value="Rhodanese-like domain"/>
    <property type="match status" value="1"/>
</dbReference>
<dbReference type="InterPro" id="IPR029021">
    <property type="entry name" value="Prot-tyrosine_phosphatase-like"/>
</dbReference>
<dbReference type="InterPro" id="IPR050348">
    <property type="entry name" value="Protein-Tyr_Phosphatase"/>
</dbReference>
<dbReference type="InterPro" id="IPR000242">
    <property type="entry name" value="PTP_cat"/>
</dbReference>
<dbReference type="InterPro" id="IPR001763">
    <property type="entry name" value="Rhodanese-like_dom"/>
</dbReference>
<dbReference type="InterPro" id="IPR036873">
    <property type="entry name" value="Rhodanese-like_dom_sf"/>
</dbReference>
<dbReference type="InterPro" id="IPR016130">
    <property type="entry name" value="Tyr_Pase_AS"/>
</dbReference>
<dbReference type="InterPro" id="IPR003595">
    <property type="entry name" value="Tyr_Pase_cat"/>
</dbReference>
<dbReference type="InterPro" id="IPR000387">
    <property type="entry name" value="Tyr_Pase_dom"/>
</dbReference>
<dbReference type="PANTHER" id="PTHR19134">
    <property type="entry name" value="RECEPTOR-TYPE TYROSINE-PROTEIN PHOSPHATASE"/>
    <property type="match status" value="1"/>
</dbReference>
<dbReference type="PANTHER" id="PTHR19134:SF547">
    <property type="entry name" value="TYROSINE-PROTEIN PHOSPHATASE 3"/>
    <property type="match status" value="1"/>
</dbReference>
<dbReference type="Pfam" id="PF00581">
    <property type="entry name" value="Rhodanese"/>
    <property type="match status" value="1"/>
</dbReference>
<dbReference type="Pfam" id="PF00102">
    <property type="entry name" value="Y_phosphatase"/>
    <property type="match status" value="2"/>
</dbReference>
<dbReference type="PRINTS" id="PR00700">
    <property type="entry name" value="PRTYPHPHTASE"/>
</dbReference>
<dbReference type="SMART" id="SM00194">
    <property type="entry name" value="PTPc"/>
    <property type="match status" value="1"/>
</dbReference>
<dbReference type="SMART" id="SM00404">
    <property type="entry name" value="PTPc_motif"/>
    <property type="match status" value="1"/>
</dbReference>
<dbReference type="SMART" id="SM00450">
    <property type="entry name" value="RHOD"/>
    <property type="match status" value="1"/>
</dbReference>
<dbReference type="SUPFAM" id="SSF52799">
    <property type="entry name" value="(Phosphotyrosine protein) phosphatases II"/>
    <property type="match status" value="1"/>
</dbReference>
<dbReference type="SUPFAM" id="SSF52821">
    <property type="entry name" value="Rhodanese/Cell cycle control phosphatase"/>
    <property type="match status" value="1"/>
</dbReference>
<dbReference type="PROSITE" id="PS50206">
    <property type="entry name" value="RHODANESE_3"/>
    <property type="match status" value="1"/>
</dbReference>
<dbReference type="PROSITE" id="PS00383">
    <property type="entry name" value="TYR_PHOSPHATASE_1"/>
    <property type="match status" value="1"/>
</dbReference>
<dbReference type="PROSITE" id="PS50056">
    <property type="entry name" value="TYR_PHOSPHATASE_2"/>
    <property type="match status" value="1"/>
</dbReference>
<dbReference type="PROSITE" id="PS50055">
    <property type="entry name" value="TYR_PHOSPHATASE_PTP"/>
    <property type="match status" value="1"/>
</dbReference>
<protein>
    <recommendedName>
        <fullName>Tyrosine-protein phosphatase 3</fullName>
        <ecNumber>3.1.3.48</ecNumber>
    </recommendedName>
    <alternativeName>
        <fullName>Protein-tyrosine phosphatase 3</fullName>
        <shortName>PTPase 3</shortName>
    </alternativeName>
</protein>
<sequence length="928" mass="105224">MKDSVDCPSILPTDRTSVLSETSTLVGSSSHVYSRHAPMNSYHNSMNSNIYHSPKASSPLVSYKTSSPVLLKRATAPVLPSFKPKEQRYNKPQGCSLITAVELGKIIETLPDEKVLLLDVRPFTEHAKSIITNSIHVCLPSTLLRRKNFTFSKLLDNLTPSEQSVLKSKLAIDNLRIIIYDSTANQTESSVSLPCYGIASKLIEFDTNVKKTVSILMCGFPQFKILFPDHINTNTFNSDCISSAEPKSPKTNLMNSLHNTAPHMTATTPLSSPQMNLKLKVPDDSRSDHSNFSSSPSPRNVLSDSPMSSSSPISALFKFQLPAPQTNINQMFKFSQNEEIMGLETYLSAVNIKEEHERWYNNDSAKKSLQNFQFPKNQNSLEKDTNKDKLGFQIRYENLSKNYEKEVIDSVIPEWFQHLMSIPKIELVSQFQKLDFLEKRRLNHSVSFRKKENSFILEKPSSYPEQLTSTSSSTIMPPKFPDVNKVQKRSHSQPIFTQYSKYKSMLSLESDSDSESDDVIISSGVELGAKNRYKDIFPYEHSRVILKKGLQSSKGIKHSHSTSDGGILDNYINANYLSLPRFSVEQNSSFQTTTTTTRRVRYIATQAPMPSTVHDFYTCILNNGVPLVLSLTNDFENGIEKCYRYWQEGNYNGIHVKLLEKKILKMPSTTSMRKNTMGTQNSSLYSAGVQGNSSNYSTDNDNDNDNNNNNNNNSNIAVTAAACDDDDDDDDDAILIRKILLTYHDQEKPYELLQIQVKNWPDLGTLLNPISILQAINVKNHIIDTLFARNYYQNDQLPTILVHCSAGCGRTGTLCTIDSILSNFEMFEMLQKEFVKLKYPAKLFDPISWTINIFRKQRISMVQNINQFIFIYDCLLFYFRLRLDDITERTDGDGSNKDNISLSALIEQIEKLEILQTFVDDKLKELPQ</sequence>
<feature type="chain" id="PRO_0000094857" description="Tyrosine-protein phosphatase 3">
    <location>
        <begin position="1"/>
        <end position="928"/>
    </location>
</feature>
<feature type="domain" description="Rhodanese" evidence="2">
    <location>
        <begin position="111"/>
        <end position="232"/>
    </location>
</feature>
<feature type="domain" description="Tyrosine-protein phosphatase" evidence="1">
    <location>
        <begin position="502"/>
        <end position="878"/>
    </location>
</feature>
<feature type="region of interest" description="Disordered" evidence="4">
    <location>
        <begin position="247"/>
        <end position="307"/>
    </location>
</feature>
<feature type="region of interest" description="Disordered" evidence="4">
    <location>
        <begin position="467"/>
        <end position="487"/>
    </location>
</feature>
<feature type="region of interest" description="Disordered" evidence="4">
    <location>
        <begin position="672"/>
        <end position="713"/>
    </location>
</feature>
<feature type="compositionally biased region" description="Polar residues" evidence="4">
    <location>
        <begin position="249"/>
        <end position="259"/>
    </location>
</feature>
<feature type="compositionally biased region" description="Polar residues" evidence="4">
    <location>
        <begin position="265"/>
        <end position="275"/>
    </location>
</feature>
<feature type="compositionally biased region" description="Basic and acidic residues" evidence="4">
    <location>
        <begin position="280"/>
        <end position="289"/>
    </location>
</feature>
<feature type="compositionally biased region" description="Low complexity" evidence="4">
    <location>
        <begin position="290"/>
        <end position="307"/>
    </location>
</feature>
<feature type="compositionally biased region" description="Polar residues" evidence="4">
    <location>
        <begin position="672"/>
        <end position="691"/>
    </location>
</feature>
<feature type="compositionally biased region" description="Low complexity" evidence="4">
    <location>
        <begin position="692"/>
        <end position="713"/>
    </location>
</feature>
<feature type="active site" description="Phosphocysteine intermediate" evidence="1 3">
    <location>
        <position position="804"/>
    </location>
</feature>
<feature type="modified residue" description="Phosphothreonine" evidence="10 11">
    <location>
        <position position="75"/>
    </location>
</feature>
<feature type="modified residue" description="Phosphoserine" evidence="13">
    <location>
        <position position="248"/>
    </location>
</feature>
<feature type="modified residue" description="Phosphoserine" evidence="13">
    <location>
        <position position="297"/>
    </location>
</feature>
<feature type="modified residue" description="Phosphoserine" evidence="12 13">
    <location>
        <position position="368"/>
    </location>
</feature>
<feature type="sequence conflict" description="In Ref. 1; AAB70811 and 2; AAB64614." evidence="9" ref="1 2">
    <original>A</original>
    <variation>P</variation>
    <location>
        <position position="717"/>
    </location>
</feature>
<feature type="sequence conflict" description="In Ref. 1; AAB70811 and 2; AAB64614." evidence="9" ref="1 2">
    <original>K</original>
    <variation>Q</variation>
    <location>
        <position position="738"/>
    </location>
</feature>
<feature type="sequence conflict" description="In Ref. 1; AAB70811 and 2; AAB64614." evidence="9" ref="1 2">
    <original>Q</original>
    <variation>E</variation>
    <location>
        <position position="857"/>
    </location>
</feature>
<evidence type="ECO:0000255" key="1">
    <source>
        <dbReference type="PROSITE-ProRule" id="PRU00160"/>
    </source>
</evidence>
<evidence type="ECO:0000255" key="2">
    <source>
        <dbReference type="PROSITE-ProRule" id="PRU00173"/>
    </source>
</evidence>
<evidence type="ECO:0000255" key="3">
    <source>
        <dbReference type="PROSITE-ProRule" id="PRU10044"/>
    </source>
</evidence>
<evidence type="ECO:0000256" key="4">
    <source>
        <dbReference type="SAM" id="MobiDB-lite"/>
    </source>
</evidence>
<evidence type="ECO:0000269" key="5">
    <source>
    </source>
</evidence>
<evidence type="ECO:0000269" key="6">
    <source>
    </source>
</evidence>
<evidence type="ECO:0000269" key="7">
    <source>
    </source>
</evidence>
<evidence type="ECO:0000269" key="8">
    <source>
    </source>
</evidence>
<evidence type="ECO:0000305" key="9"/>
<evidence type="ECO:0007744" key="10">
    <source>
    </source>
</evidence>
<evidence type="ECO:0007744" key="11">
    <source>
    </source>
</evidence>
<evidence type="ECO:0007744" key="12">
    <source>
    </source>
</evidence>
<evidence type="ECO:0007744" key="13">
    <source>
    </source>
</evidence>
<organism>
    <name type="scientific">Saccharomyces cerevisiae (strain ATCC 204508 / S288c)</name>
    <name type="common">Baker's yeast</name>
    <dbReference type="NCBI Taxonomy" id="559292"/>
    <lineage>
        <taxon>Eukaryota</taxon>
        <taxon>Fungi</taxon>
        <taxon>Dikarya</taxon>
        <taxon>Ascomycota</taxon>
        <taxon>Saccharomycotina</taxon>
        <taxon>Saccharomycetes</taxon>
        <taxon>Saccharomycetales</taxon>
        <taxon>Saccharomycetaceae</taxon>
        <taxon>Saccharomyces</taxon>
    </lineage>
</organism>
<gene>
    <name type="primary">PTP3</name>
    <name type="ordered locus">YER075C</name>
</gene>
<accession>P40048</accession>
<accession>D3DLY1</accession>
<proteinExistence type="evidence at protein level"/>
<reference key="1">
    <citation type="journal article" date="1997" name="Genes Dev.">
        <title>Differential regulation of FUS3 MAP kinase by tyrosine-specific phosphatases PTP2/PTP3 and dual-specificity phosphatase MSG5 in Saccharomyces cerevisiae.</title>
        <authorList>
            <person name="Zhan X.-L."/>
            <person name="Deschenes R.J."/>
            <person name="Guan K.-L."/>
        </authorList>
    </citation>
    <scope>NUCLEOTIDE SEQUENCE [GENOMIC DNA]</scope>
    <scope>CHARACTERIZATION</scope>
</reference>
<reference key="2">
    <citation type="journal article" date="1997" name="Nature">
        <title>The nucleotide sequence of Saccharomyces cerevisiae chromosome V.</title>
        <authorList>
            <person name="Dietrich F.S."/>
            <person name="Mulligan J.T."/>
            <person name="Hennessy K.M."/>
            <person name="Yelton M.A."/>
            <person name="Allen E."/>
            <person name="Araujo R."/>
            <person name="Aviles E."/>
            <person name="Berno A."/>
            <person name="Brennan T."/>
            <person name="Carpenter J."/>
            <person name="Chen E."/>
            <person name="Cherry J.M."/>
            <person name="Chung E."/>
            <person name="Duncan M."/>
            <person name="Guzman E."/>
            <person name="Hartzell G."/>
            <person name="Hunicke-Smith S."/>
            <person name="Hyman R.W."/>
            <person name="Kayser A."/>
            <person name="Komp C."/>
            <person name="Lashkari D."/>
            <person name="Lew H."/>
            <person name="Lin D."/>
            <person name="Mosedale D."/>
            <person name="Nakahara K."/>
            <person name="Namath A."/>
            <person name="Norgren R."/>
            <person name="Oefner P."/>
            <person name="Oh C."/>
            <person name="Petel F.X."/>
            <person name="Roberts D."/>
            <person name="Sehl P."/>
            <person name="Schramm S."/>
            <person name="Shogren T."/>
            <person name="Smith V."/>
            <person name="Taylor P."/>
            <person name="Wei Y."/>
            <person name="Botstein D."/>
            <person name="Davis R.W."/>
        </authorList>
    </citation>
    <scope>NUCLEOTIDE SEQUENCE [LARGE SCALE GENOMIC DNA]</scope>
    <source>
        <strain>ATCC 204508 / S288c</strain>
    </source>
</reference>
<reference key="3">
    <citation type="journal article" date="2014" name="G3 (Bethesda)">
        <title>The reference genome sequence of Saccharomyces cerevisiae: Then and now.</title>
        <authorList>
            <person name="Engel S.R."/>
            <person name="Dietrich F.S."/>
            <person name="Fisk D.G."/>
            <person name="Binkley G."/>
            <person name="Balakrishnan R."/>
            <person name="Costanzo M.C."/>
            <person name="Dwight S.S."/>
            <person name="Hitz B.C."/>
            <person name="Karra K."/>
            <person name="Nash R.S."/>
            <person name="Weng S."/>
            <person name="Wong E.D."/>
            <person name="Lloyd P."/>
            <person name="Skrzypek M.S."/>
            <person name="Miyasato S.R."/>
            <person name="Simison M."/>
            <person name="Cherry J.M."/>
        </authorList>
    </citation>
    <scope>GENOME REANNOTATION</scope>
    <scope>SEQUENCE REVISION TO 717; 738 AND 857</scope>
    <source>
        <strain>ATCC 204508 / S288c</strain>
    </source>
</reference>
<reference key="4">
    <citation type="journal article" date="1997" name="Mol. Cell. Biol.">
        <title>Regulation of the Saccharomyces cerevisiae HOG1 mitogen-activated protein kinase by the PTP2 and PTP3 protein tyrosine phosphatases.</title>
        <authorList>
            <person name="Wurgler-Murphy S.M."/>
            <person name="Maeda T."/>
            <person name="Witten E.A."/>
            <person name="Saito H."/>
        </authorList>
    </citation>
    <scope>FUNCTION</scope>
</reference>
<reference key="5">
    <citation type="journal article" date="1997" name="J. Biol. Chem.">
        <title>Two protein-tyrosine phosphatases inactivate the osmotic stress response pathway in yeast by targeting the mitogen-activated protein kinase, Hog1.</title>
        <authorList>
            <person name="Jacoby T."/>
            <person name="Flanagan H."/>
            <person name="Faykin A."/>
            <person name="Seto A.G."/>
            <person name="Mattison C.P."/>
            <person name="Ota I.M."/>
        </authorList>
    </citation>
    <scope>FUNCTION</scope>
    <scope>INTERACTION WITH HOG1</scope>
</reference>
<reference key="6">
    <citation type="journal article" date="2003" name="Nature">
        <title>Global analysis of protein localization in budding yeast.</title>
        <authorList>
            <person name="Huh W.-K."/>
            <person name="Falvo J.V."/>
            <person name="Gerke L.C."/>
            <person name="Carroll A.S."/>
            <person name="Howson R.W."/>
            <person name="Weissman J.S."/>
            <person name="O'Shea E.K."/>
        </authorList>
    </citation>
    <scope>SUBCELLULAR LOCATION [LARGE SCALE ANALYSIS]</scope>
</reference>
<reference key="7">
    <citation type="journal article" date="2003" name="Nature">
        <title>Global analysis of protein expression in yeast.</title>
        <authorList>
            <person name="Ghaemmaghami S."/>
            <person name="Huh W.-K."/>
            <person name="Bower K."/>
            <person name="Howson R.W."/>
            <person name="Belle A."/>
            <person name="Dephoure N."/>
            <person name="O'Shea E.K."/>
            <person name="Weissman J.S."/>
        </authorList>
    </citation>
    <scope>LEVEL OF PROTEIN EXPRESSION [LARGE SCALE ANALYSIS]</scope>
</reference>
<reference key="8">
    <citation type="journal article" date="2007" name="J. Proteome Res.">
        <title>Large-scale phosphorylation analysis of alpha-factor-arrested Saccharomyces cerevisiae.</title>
        <authorList>
            <person name="Li X."/>
            <person name="Gerber S.A."/>
            <person name="Rudner A.D."/>
            <person name="Beausoleil S.A."/>
            <person name="Haas W."/>
            <person name="Villen J."/>
            <person name="Elias J.E."/>
            <person name="Gygi S.P."/>
        </authorList>
    </citation>
    <scope>PHOSPHORYLATION [LARGE SCALE ANALYSIS] AT THR-75</scope>
    <scope>IDENTIFICATION BY MASS SPECTROMETRY [LARGE SCALE ANALYSIS]</scope>
    <source>
        <strain>ADR376</strain>
    </source>
</reference>
<reference key="9">
    <citation type="journal article" date="2007" name="Proc. Natl. Acad. Sci. U.S.A.">
        <title>Analysis of phosphorylation sites on proteins from Saccharomyces cerevisiae by electron transfer dissociation (ETD) mass spectrometry.</title>
        <authorList>
            <person name="Chi A."/>
            <person name="Huttenhower C."/>
            <person name="Geer L.Y."/>
            <person name="Coon J.J."/>
            <person name="Syka J.E.P."/>
            <person name="Bai D.L."/>
            <person name="Shabanowitz J."/>
            <person name="Burke D.J."/>
            <person name="Troyanskaya O.G."/>
            <person name="Hunt D.F."/>
        </authorList>
    </citation>
    <scope>PHOSPHORYLATION [LARGE SCALE ANALYSIS] AT THR-75</scope>
    <scope>IDENTIFICATION BY MASS SPECTROMETRY [LARGE SCALE ANALYSIS]</scope>
</reference>
<reference key="10">
    <citation type="journal article" date="2008" name="Mol. Cell. Proteomics">
        <title>A multidimensional chromatography technology for in-depth phosphoproteome analysis.</title>
        <authorList>
            <person name="Albuquerque C.P."/>
            <person name="Smolka M.B."/>
            <person name="Payne S.H."/>
            <person name="Bafna V."/>
            <person name="Eng J."/>
            <person name="Zhou H."/>
        </authorList>
    </citation>
    <scope>PHOSPHORYLATION [LARGE SCALE ANALYSIS] AT SER-368</scope>
    <scope>IDENTIFICATION BY MASS SPECTROMETRY [LARGE SCALE ANALYSIS]</scope>
</reference>
<reference key="11">
    <citation type="journal article" date="2009" name="Science">
        <title>Global analysis of Cdk1 substrate phosphorylation sites provides insights into evolution.</title>
        <authorList>
            <person name="Holt L.J."/>
            <person name="Tuch B.B."/>
            <person name="Villen J."/>
            <person name="Johnson A.D."/>
            <person name="Gygi S.P."/>
            <person name="Morgan D.O."/>
        </authorList>
    </citation>
    <scope>PHOSPHORYLATION [LARGE SCALE ANALYSIS] AT SER-248; SER-297 AND SER-368</scope>
    <scope>IDENTIFICATION BY MASS SPECTROMETRY [LARGE SCALE ANALYSIS]</scope>
</reference>
<comment type="function">
    <text evidence="7 8">Major phosphatase responsible for tyrosine dephosphorylation of MAP kinases FUS3 and HOG1 to inactivate their activity; it also has important roles, along with MSG5, in the inactivation of FUS3 following pheromone stimulation.</text>
</comment>
<comment type="catalytic activity">
    <reaction evidence="3">
        <text>O-phospho-L-tyrosyl-[protein] + H2O = L-tyrosyl-[protein] + phosphate</text>
        <dbReference type="Rhea" id="RHEA:10684"/>
        <dbReference type="Rhea" id="RHEA-COMP:10136"/>
        <dbReference type="Rhea" id="RHEA-COMP:20101"/>
        <dbReference type="ChEBI" id="CHEBI:15377"/>
        <dbReference type="ChEBI" id="CHEBI:43474"/>
        <dbReference type="ChEBI" id="CHEBI:46858"/>
        <dbReference type="ChEBI" id="CHEBI:61978"/>
        <dbReference type="EC" id="3.1.3.48"/>
    </reaction>
</comment>
<comment type="subunit">
    <text evidence="8">Interacts with HOG1.</text>
</comment>
<comment type="subcellular location">
    <subcellularLocation>
        <location evidence="5">Cytoplasm</location>
    </subcellularLocation>
</comment>
<comment type="miscellaneous">
    <text evidence="6">Present with 768 molecules/cell in log phase SD medium.</text>
</comment>
<comment type="similarity">
    <text evidence="9">Belongs to the protein-tyrosine phosphatase family. Non-receptor class subfamily.</text>
</comment>